<reference evidence="4" key="1">
    <citation type="journal article" date="2015" name="Peptides">
        <title>Host-defense and trefoil factor family peptides in skin secretions of the Mawa clawed frog Xenopus boumbaensis (Pipidae).</title>
        <authorList>
            <person name="Conlon J.M."/>
            <person name="Mechkarska M."/>
            <person name="Kolodziejek J."/>
            <person name="Leprince J."/>
            <person name="Coquet L."/>
            <person name="Jouenne T."/>
            <person name="Vaudry H."/>
            <person name="Nowotny N."/>
            <person name="King J.D."/>
        </authorList>
    </citation>
    <scope>PROTEIN SEQUENCE</scope>
    <scope>SUBCELLULAR LOCATION</scope>
    <scope>MASS SPECTROMETRY</scope>
    <source>
        <tissue evidence="3">Skin secretion</tissue>
    </source>
</reference>
<sequence length="25" mass="2691">GWASKIGQTLGKMAKVGLHELIQPK</sequence>
<proteinExistence type="evidence at protein level"/>
<evidence type="ECO:0000250" key="1">
    <source>
        <dbReference type="UniProtKB" id="C0HK86"/>
    </source>
</evidence>
<evidence type="ECO:0000269" key="2">
    <source>
    </source>
</evidence>
<evidence type="ECO:0000303" key="3">
    <source>
    </source>
</evidence>
<evidence type="ECO:0000305" key="4"/>
<evidence type="ECO:0000305" key="5">
    <source>
    </source>
</evidence>
<organism evidence="3">
    <name type="scientific">Xenopus boumbaensis</name>
    <name type="common">Mawa clawed frog</name>
    <dbReference type="NCBI Taxonomy" id="288550"/>
    <lineage>
        <taxon>Eukaryota</taxon>
        <taxon>Metazoa</taxon>
        <taxon>Chordata</taxon>
        <taxon>Craniata</taxon>
        <taxon>Vertebrata</taxon>
        <taxon>Euteleostomi</taxon>
        <taxon>Amphibia</taxon>
        <taxon>Batrachia</taxon>
        <taxon>Anura</taxon>
        <taxon>Pipoidea</taxon>
        <taxon>Pipidae</taxon>
        <taxon>Xenopodinae</taxon>
        <taxon>Xenopus</taxon>
        <taxon>Xenopus</taxon>
    </lineage>
</organism>
<feature type="peptide" id="PRO_0000440797" description="Xenoposin precursor fragment BM1" evidence="2">
    <location>
        <begin position="1"/>
        <end position="25"/>
    </location>
</feature>
<dbReference type="GO" id="GO:0005576">
    <property type="term" value="C:extracellular region"/>
    <property type="evidence" value="ECO:0007669"/>
    <property type="project" value="UniProtKB-SubCell"/>
</dbReference>
<dbReference type="GO" id="GO:0006952">
    <property type="term" value="P:defense response"/>
    <property type="evidence" value="ECO:0007669"/>
    <property type="project" value="UniProtKB-KW"/>
</dbReference>
<accession>C0HKM0</accession>
<protein>
    <recommendedName>
        <fullName evidence="3">Xenoposin precursor fragment BM1</fullName>
    </recommendedName>
    <alternativeName>
        <fullName evidence="3">XPF-BM1</fullName>
    </alternativeName>
</protein>
<keyword id="KW-0878">Amphibian defense peptide</keyword>
<keyword id="KW-0929">Antimicrobial</keyword>
<keyword id="KW-0903">Direct protein sequencing</keyword>
<keyword id="KW-0964">Secreted</keyword>
<name>XFBM1_XENBM</name>
<comment type="function">
    <text evidence="1">Antimicrobial peptide.</text>
</comment>
<comment type="subcellular location">
    <subcellularLocation>
        <location evidence="2">Secreted</location>
    </subcellularLocation>
</comment>
<comment type="tissue specificity">
    <text evidence="5">Expressed by the skin glands.</text>
</comment>
<comment type="mass spectrometry" mass="2690.3" method="MALDI" evidence="2"/>
<comment type="similarity">
    <text evidence="4">Belongs to the gastrin/cholecystokinin family. Magainin subfamily.</text>
</comment>